<protein>
    <recommendedName>
        <fullName evidence="1">Inner membrane-spanning protein YciB</fullName>
    </recommendedName>
</protein>
<evidence type="ECO:0000255" key="1">
    <source>
        <dbReference type="HAMAP-Rule" id="MF_00189"/>
    </source>
</evidence>
<comment type="function">
    <text evidence="1">Plays a role in cell envelope biogenesis, maintenance of cell envelope integrity and membrane homeostasis.</text>
</comment>
<comment type="subcellular location">
    <subcellularLocation>
        <location evidence="1">Cell inner membrane</location>
        <topology evidence="1">Multi-pass membrane protein</topology>
    </subcellularLocation>
</comment>
<comment type="similarity">
    <text evidence="1">Belongs to the YciB family.</text>
</comment>
<accession>Q3KG77</accession>
<gene>
    <name evidence="1" type="primary">yciB</name>
    <name type="ordered locus">Pfl01_1486</name>
</gene>
<keyword id="KW-0997">Cell inner membrane</keyword>
<keyword id="KW-1003">Cell membrane</keyword>
<keyword id="KW-0472">Membrane</keyword>
<keyword id="KW-0812">Transmembrane</keyword>
<keyword id="KW-1133">Transmembrane helix</keyword>
<name>YCIB_PSEPF</name>
<organism>
    <name type="scientific">Pseudomonas fluorescens (strain Pf0-1)</name>
    <dbReference type="NCBI Taxonomy" id="205922"/>
    <lineage>
        <taxon>Bacteria</taxon>
        <taxon>Pseudomonadati</taxon>
        <taxon>Pseudomonadota</taxon>
        <taxon>Gammaproteobacteria</taxon>
        <taxon>Pseudomonadales</taxon>
        <taxon>Pseudomonadaceae</taxon>
        <taxon>Pseudomonas</taxon>
    </lineage>
</organism>
<proteinExistence type="inferred from homology"/>
<sequence length="198" mass="22367">MKQFIDFIPLLLFFIVYKLDPRTVDVAGHELTVGGIYSATAMLIISSLVVYGALFIKQRKLEKSQWLTLIACLVFGSLTLAFHSETFLKWKAPVVNWLFALAFIGSHFIGDRLLIKRIMGHALTLPDPVWTRLNIAWIAFFLFCGAANLFVAFTFQSIWVDFKVFGSLGMTVLFLVGQGIYLSRHLHDADTTTPKTED</sequence>
<dbReference type="EMBL" id="CP000094">
    <property type="protein sequence ID" value="ABA73229.1"/>
    <property type="molecule type" value="Genomic_DNA"/>
</dbReference>
<dbReference type="RefSeq" id="WP_011333003.1">
    <property type="nucleotide sequence ID" value="NC_007492.2"/>
</dbReference>
<dbReference type="KEGG" id="pfo:Pfl01_1486"/>
<dbReference type="eggNOG" id="COG2917">
    <property type="taxonomic scope" value="Bacteria"/>
</dbReference>
<dbReference type="HOGENOM" id="CLU_089554_2_0_6"/>
<dbReference type="Proteomes" id="UP000002704">
    <property type="component" value="Chromosome"/>
</dbReference>
<dbReference type="GO" id="GO:0005886">
    <property type="term" value="C:plasma membrane"/>
    <property type="evidence" value="ECO:0007669"/>
    <property type="project" value="UniProtKB-SubCell"/>
</dbReference>
<dbReference type="HAMAP" id="MF_00189">
    <property type="entry name" value="YciB"/>
    <property type="match status" value="1"/>
</dbReference>
<dbReference type="InterPro" id="IPR006008">
    <property type="entry name" value="YciB"/>
</dbReference>
<dbReference type="NCBIfam" id="TIGR00997">
    <property type="entry name" value="ispZ"/>
    <property type="match status" value="1"/>
</dbReference>
<dbReference type="NCBIfam" id="NF001325">
    <property type="entry name" value="PRK00259.1-3"/>
    <property type="match status" value="1"/>
</dbReference>
<dbReference type="NCBIfam" id="NF001327">
    <property type="entry name" value="PRK00259.1-5"/>
    <property type="match status" value="1"/>
</dbReference>
<dbReference type="PANTHER" id="PTHR36917:SF1">
    <property type="entry name" value="INNER MEMBRANE-SPANNING PROTEIN YCIB"/>
    <property type="match status" value="1"/>
</dbReference>
<dbReference type="PANTHER" id="PTHR36917">
    <property type="entry name" value="INTRACELLULAR SEPTATION PROTEIN A-RELATED"/>
    <property type="match status" value="1"/>
</dbReference>
<dbReference type="Pfam" id="PF04279">
    <property type="entry name" value="IspA"/>
    <property type="match status" value="1"/>
</dbReference>
<reference key="1">
    <citation type="journal article" date="2009" name="Genome Biol.">
        <title>Genomic and genetic analyses of diversity and plant interactions of Pseudomonas fluorescens.</title>
        <authorList>
            <person name="Silby M.W."/>
            <person name="Cerdeno-Tarraga A.M."/>
            <person name="Vernikos G.S."/>
            <person name="Giddens S.R."/>
            <person name="Jackson R.W."/>
            <person name="Preston G.M."/>
            <person name="Zhang X.-X."/>
            <person name="Moon C.D."/>
            <person name="Gehrig S.M."/>
            <person name="Godfrey S.A.C."/>
            <person name="Knight C.G."/>
            <person name="Malone J.G."/>
            <person name="Robinson Z."/>
            <person name="Spiers A.J."/>
            <person name="Harris S."/>
            <person name="Challis G.L."/>
            <person name="Yaxley A.M."/>
            <person name="Harris D."/>
            <person name="Seeger K."/>
            <person name="Murphy L."/>
            <person name="Rutter S."/>
            <person name="Squares R."/>
            <person name="Quail M.A."/>
            <person name="Saunders E."/>
            <person name="Mavromatis K."/>
            <person name="Brettin T.S."/>
            <person name="Bentley S.D."/>
            <person name="Hothersall J."/>
            <person name="Stephens E."/>
            <person name="Thomas C.M."/>
            <person name="Parkhill J."/>
            <person name="Levy S.B."/>
            <person name="Rainey P.B."/>
            <person name="Thomson N.R."/>
        </authorList>
    </citation>
    <scope>NUCLEOTIDE SEQUENCE [LARGE SCALE GENOMIC DNA]</scope>
    <source>
        <strain>Pf0-1</strain>
    </source>
</reference>
<feature type="chain" id="PRO_1000021045" description="Inner membrane-spanning protein YciB">
    <location>
        <begin position="1"/>
        <end position="198"/>
    </location>
</feature>
<feature type="transmembrane region" description="Helical" evidence="1">
    <location>
        <begin position="36"/>
        <end position="56"/>
    </location>
</feature>
<feature type="transmembrane region" description="Helical" evidence="1">
    <location>
        <begin position="67"/>
        <end position="87"/>
    </location>
</feature>
<feature type="transmembrane region" description="Helical" evidence="1">
    <location>
        <begin position="90"/>
        <end position="110"/>
    </location>
</feature>
<feature type="transmembrane region" description="Helical" evidence="1">
    <location>
        <begin position="135"/>
        <end position="155"/>
    </location>
</feature>
<feature type="transmembrane region" description="Helical" evidence="1">
    <location>
        <begin position="162"/>
        <end position="182"/>
    </location>
</feature>